<accession>Q8XA01</accession>
<sequence length="201" mass="22520">MAEKFIKHTGLVVPLDAANVDTDAIIPKQFLQKVTRTGFGAHLFNDWRFLDEKGQQPNPDFVLNFSQYQGASILLARENFGCGSSREHAPWALTDYGFKVVIAPSFADIFYGNSFNNQLLPVKLSDAEVDELFALVKANPGIHFDVDLEAQEVKAGEKTYRFTIDAFRRHCMMNGLDSIGLTLQHDDAIAAYEAKQPAFMR</sequence>
<comment type="function">
    <text evidence="2">Catalyzes the isomerization between 2-isopropylmalate and 3-isopropylmalate, via the formation of 2-isopropylmaleate.</text>
</comment>
<comment type="catalytic activity">
    <reaction evidence="2">
        <text>(2R,3S)-3-isopropylmalate = (2S)-2-isopropylmalate</text>
        <dbReference type="Rhea" id="RHEA:32287"/>
        <dbReference type="ChEBI" id="CHEBI:1178"/>
        <dbReference type="ChEBI" id="CHEBI:35121"/>
        <dbReference type="EC" id="4.2.1.33"/>
    </reaction>
</comment>
<comment type="pathway">
    <text evidence="2">Amino-acid biosynthesis; L-leucine biosynthesis; L-leucine from 3-methyl-2-oxobutanoate: step 2/4.</text>
</comment>
<comment type="subunit">
    <text evidence="2">Heterodimer of LeuC and LeuD.</text>
</comment>
<comment type="similarity">
    <text evidence="2">Belongs to the LeuD family. LeuD type 1 subfamily.</text>
</comment>
<name>LEUD_ECO57</name>
<protein>
    <recommendedName>
        <fullName evidence="2">3-isopropylmalate dehydratase small subunit</fullName>
        <ecNumber evidence="2">4.2.1.33</ecNumber>
    </recommendedName>
    <alternativeName>
        <fullName evidence="2">Alpha-IPM isomerase</fullName>
        <shortName evidence="2">IPMI</shortName>
    </alternativeName>
    <alternativeName>
        <fullName evidence="2">Isopropylmalate isomerase</fullName>
    </alternativeName>
</protein>
<organism>
    <name type="scientific">Escherichia coli O157:H7</name>
    <dbReference type="NCBI Taxonomy" id="83334"/>
    <lineage>
        <taxon>Bacteria</taxon>
        <taxon>Pseudomonadati</taxon>
        <taxon>Pseudomonadota</taxon>
        <taxon>Gammaproteobacteria</taxon>
        <taxon>Enterobacterales</taxon>
        <taxon>Enterobacteriaceae</taxon>
        <taxon>Escherichia</taxon>
    </lineage>
</organism>
<proteinExistence type="inferred from homology"/>
<feature type="initiator methionine" description="Removed" evidence="1">
    <location>
        <position position="1"/>
    </location>
</feature>
<feature type="chain" id="PRO_0000141820" description="3-isopropylmalate dehydratase small subunit">
    <location>
        <begin position="2"/>
        <end position="201"/>
    </location>
</feature>
<evidence type="ECO:0000250" key="1"/>
<evidence type="ECO:0000255" key="2">
    <source>
        <dbReference type="HAMAP-Rule" id="MF_01031"/>
    </source>
</evidence>
<gene>
    <name evidence="2" type="primary">leuD</name>
    <name type="ordered locus">Z0080</name>
    <name type="ordered locus">ECs0075</name>
</gene>
<keyword id="KW-0028">Amino-acid biosynthesis</keyword>
<keyword id="KW-0100">Branched-chain amino acid biosynthesis</keyword>
<keyword id="KW-0432">Leucine biosynthesis</keyword>
<keyword id="KW-0456">Lyase</keyword>
<keyword id="KW-1185">Reference proteome</keyword>
<dbReference type="EC" id="4.2.1.33" evidence="2"/>
<dbReference type="EMBL" id="AE005174">
    <property type="protein sequence ID" value="AAG54375.1"/>
    <property type="molecule type" value="Genomic_DNA"/>
</dbReference>
<dbReference type="EMBL" id="BA000007">
    <property type="protein sequence ID" value="BAB33498.1"/>
    <property type="molecule type" value="Genomic_DNA"/>
</dbReference>
<dbReference type="PIR" id="C85489">
    <property type="entry name" value="C85489"/>
</dbReference>
<dbReference type="PIR" id="C90638">
    <property type="entry name" value="C90638"/>
</dbReference>
<dbReference type="RefSeq" id="NP_308102.1">
    <property type="nucleotide sequence ID" value="NC_002695.1"/>
</dbReference>
<dbReference type="RefSeq" id="WP_000818246.1">
    <property type="nucleotide sequence ID" value="NZ_VOAI01000002.1"/>
</dbReference>
<dbReference type="SMR" id="Q8XA01"/>
<dbReference type="STRING" id="155864.Z0080"/>
<dbReference type="GeneID" id="913503"/>
<dbReference type="KEGG" id="ece:Z0080"/>
<dbReference type="KEGG" id="ecs:ECs_0075"/>
<dbReference type="PATRIC" id="fig|386585.9.peg.175"/>
<dbReference type="eggNOG" id="COG0066">
    <property type="taxonomic scope" value="Bacteria"/>
</dbReference>
<dbReference type="HOGENOM" id="CLU_081378_0_3_6"/>
<dbReference type="OMA" id="FGQHLFH"/>
<dbReference type="UniPathway" id="UPA00048">
    <property type="reaction ID" value="UER00071"/>
</dbReference>
<dbReference type="Proteomes" id="UP000000558">
    <property type="component" value="Chromosome"/>
</dbReference>
<dbReference type="Proteomes" id="UP000002519">
    <property type="component" value="Chromosome"/>
</dbReference>
<dbReference type="GO" id="GO:0009316">
    <property type="term" value="C:3-isopropylmalate dehydratase complex"/>
    <property type="evidence" value="ECO:0007669"/>
    <property type="project" value="InterPro"/>
</dbReference>
<dbReference type="GO" id="GO:0003861">
    <property type="term" value="F:3-isopropylmalate dehydratase activity"/>
    <property type="evidence" value="ECO:0007669"/>
    <property type="project" value="UniProtKB-UniRule"/>
</dbReference>
<dbReference type="GO" id="GO:0009098">
    <property type="term" value="P:L-leucine biosynthetic process"/>
    <property type="evidence" value="ECO:0007669"/>
    <property type="project" value="UniProtKB-UniRule"/>
</dbReference>
<dbReference type="CDD" id="cd01577">
    <property type="entry name" value="IPMI_Swivel"/>
    <property type="match status" value="1"/>
</dbReference>
<dbReference type="FunFam" id="3.20.19.10:FF:000003">
    <property type="entry name" value="3-isopropylmalate dehydratase small subunit"/>
    <property type="match status" value="1"/>
</dbReference>
<dbReference type="Gene3D" id="3.20.19.10">
    <property type="entry name" value="Aconitase, domain 4"/>
    <property type="match status" value="1"/>
</dbReference>
<dbReference type="HAMAP" id="MF_01031">
    <property type="entry name" value="LeuD_type1"/>
    <property type="match status" value="1"/>
</dbReference>
<dbReference type="InterPro" id="IPR004431">
    <property type="entry name" value="3-IsopropMal_deHydase_ssu"/>
</dbReference>
<dbReference type="InterPro" id="IPR015928">
    <property type="entry name" value="Aconitase/3IPM_dehydase_swvl"/>
</dbReference>
<dbReference type="InterPro" id="IPR000573">
    <property type="entry name" value="AconitaseA/IPMdHydase_ssu_swvl"/>
</dbReference>
<dbReference type="InterPro" id="IPR033940">
    <property type="entry name" value="IPMI_Swivel"/>
</dbReference>
<dbReference type="InterPro" id="IPR050075">
    <property type="entry name" value="LeuD"/>
</dbReference>
<dbReference type="NCBIfam" id="TIGR00171">
    <property type="entry name" value="leuD"/>
    <property type="match status" value="1"/>
</dbReference>
<dbReference type="NCBIfam" id="NF002458">
    <property type="entry name" value="PRK01641.1"/>
    <property type="match status" value="1"/>
</dbReference>
<dbReference type="PANTHER" id="PTHR43345:SF5">
    <property type="entry name" value="3-ISOPROPYLMALATE DEHYDRATASE SMALL SUBUNIT"/>
    <property type="match status" value="1"/>
</dbReference>
<dbReference type="PANTHER" id="PTHR43345">
    <property type="entry name" value="3-ISOPROPYLMALATE DEHYDRATASE SMALL SUBUNIT 2-RELATED-RELATED"/>
    <property type="match status" value="1"/>
</dbReference>
<dbReference type="Pfam" id="PF00694">
    <property type="entry name" value="Aconitase_C"/>
    <property type="match status" value="1"/>
</dbReference>
<dbReference type="SUPFAM" id="SSF52016">
    <property type="entry name" value="LeuD/IlvD-like"/>
    <property type="match status" value="1"/>
</dbReference>
<reference key="1">
    <citation type="journal article" date="2001" name="Nature">
        <title>Genome sequence of enterohaemorrhagic Escherichia coli O157:H7.</title>
        <authorList>
            <person name="Perna N.T."/>
            <person name="Plunkett G. III"/>
            <person name="Burland V."/>
            <person name="Mau B."/>
            <person name="Glasner J.D."/>
            <person name="Rose D.J."/>
            <person name="Mayhew G.F."/>
            <person name="Evans P.S."/>
            <person name="Gregor J."/>
            <person name="Kirkpatrick H.A."/>
            <person name="Posfai G."/>
            <person name="Hackett J."/>
            <person name="Klink S."/>
            <person name="Boutin A."/>
            <person name="Shao Y."/>
            <person name="Miller L."/>
            <person name="Grotbeck E.J."/>
            <person name="Davis N.W."/>
            <person name="Lim A."/>
            <person name="Dimalanta E.T."/>
            <person name="Potamousis K."/>
            <person name="Apodaca J."/>
            <person name="Anantharaman T.S."/>
            <person name="Lin J."/>
            <person name="Yen G."/>
            <person name="Schwartz D.C."/>
            <person name="Welch R.A."/>
            <person name="Blattner F.R."/>
        </authorList>
    </citation>
    <scope>NUCLEOTIDE SEQUENCE [LARGE SCALE GENOMIC DNA]</scope>
    <source>
        <strain>O157:H7 / EDL933 / ATCC 700927 / EHEC</strain>
    </source>
</reference>
<reference key="2">
    <citation type="journal article" date="2001" name="DNA Res.">
        <title>Complete genome sequence of enterohemorrhagic Escherichia coli O157:H7 and genomic comparison with a laboratory strain K-12.</title>
        <authorList>
            <person name="Hayashi T."/>
            <person name="Makino K."/>
            <person name="Ohnishi M."/>
            <person name="Kurokawa K."/>
            <person name="Ishii K."/>
            <person name="Yokoyama K."/>
            <person name="Han C.-G."/>
            <person name="Ohtsubo E."/>
            <person name="Nakayama K."/>
            <person name="Murata T."/>
            <person name="Tanaka M."/>
            <person name="Tobe T."/>
            <person name="Iida T."/>
            <person name="Takami H."/>
            <person name="Honda T."/>
            <person name="Sasakawa C."/>
            <person name="Ogasawara N."/>
            <person name="Yasunaga T."/>
            <person name="Kuhara S."/>
            <person name="Shiba T."/>
            <person name="Hattori M."/>
            <person name="Shinagawa H."/>
        </authorList>
    </citation>
    <scope>NUCLEOTIDE SEQUENCE [LARGE SCALE GENOMIC DNA]</scope>
    <source>
        <strain>O157:H7 / Sakai / RIMD 0509952 / EHEC</strain>
    </source>
</reference>